<evidence type="ECO:0000255" key="1">
    <source>
        <dbReference type="PROSITE-ProRule" id="PRU00175"/>
    </source>
</evidence>
<evidence type="ECO:0000269" key="2">
    <source>
    </source>
</evidence>
<evidence type="ECO:0000303" key="3">
    <source>
    </source>
</evidence>
<evidence type="ECO:0000305" key="4"/>
<evidence type="ECO:0000312" key="5">
    <source>
        <dbReference type="EMBL" id="EEC72814.1"/>
    </source>
</evidence>
<keyword id="KW-0963">Cytoplasm</keyword>
<keyword id="KW-0217">Developmental protein</keyword>
<keyword id="KW-0479">Metal-binding</keyword>
<keyword id="KW-1185">Reference proteome</keyword>
<keyword id="KW-0808">Transferase</keyword>
<keyword id="KW-0833">Ubl conjugation pathway</keyword>
<keyword id="KW-0862">Zinc</keyword>
<keyword id="KW-0863">Zinc-finger</keyword>
<name>GW2_ORYSI</name>
<proteinExistence type="evidence at protein level"/>
<sequence length="425" mass="47399">MGNRIGGRRKAGVEERYTRPQGLYEHRDIDQKKLRKLILEAKLAPCYMGADDAAAAADLEECPICFLYYPSLNRSKCCSKGICTECFLQMKPTHTAQPTQCPFCKTPSYAVEYRGVKTKEERSIEQFEEQKVIEAQMRMRQQALQDEEDKMKRKQNRCSSSRTITPTKEVEYRDICSTSFSVPSYRCAEQETECCSSEPSCSAQTSMRPFHSRHNRDDNIDMNIEDMMVMEAIWRSIQEQGSIGNPVCGNFMPVTEPSPRERQPFVPAASLEIPHGGGFSCAVAAMAEHQPPSMDFSYMAGSSAFPVFDMFRRPCNIAGGSMCNLESSPESWSGIAPSCSREVVREEGECSADHWSEGAEAGTSYAGSDIVADAGTMPQLPFAENFAMAPSHFRPESIEEQMMFSMALSLADGHGRTHSQGLAWL</sequence>
<accession>A4GWX9</accession>
<accession>B8AEX0</accession>
<feature type="chain" id="PRO_0000444875" description="E3 ubiquitin-protein ligase GW2">
    <location>
        <begin position="1"/>
        <end position="425"/>
    </location>
</feature>
<feature type="zinc finger region" description="RING-type; degenerate" evidence="1">
    <location>
        <begin position="62"/>
        <end position="105"/>
    </location>
</feature>
<reference key="1">
    <citation type="journal article" date="2007" name="Nat. Genet.">
        <title>A QTL for rice grain width and weight encodes a previously unknown RING-type E3 ubiquitin ligase.</title>
        <authorList>
            <person name="Song X.J."/>
            <person name="Huang W."/>
            <person name="Shi M."/>
            <person name="Zhu M.Z."/>
            <person name="Lin H.X."/>
        </authorList>
    </citation>
    <scope>NUCLEOTIDE SEQUENCE [MRNA]</scope>
    <scope>FUNCTION</scope>
    <scope>CATALYTIC ACTIVITY</scope>
    <scope>SUBCELLULAR LOCATION</scope>
    <scope>TISSUE SPECIFICITY</scope>
</reference>
<reference key="2">
    <citation type="journal article" date="2005" name="PLoS Biol.">
        <title>The genomes of Oryza sativa: a history of duplications.</title>
        <authorList>
            <person name="Yu J."/>
            <person name="Wang J."/>
            <person name="Lin W."/>
            <person name="Li S."/>
            <person name="Li H."/>
            <person name="Zhou J."/>
            <person name="Ni P."/>
            <person name="Dong W."/>
            <person name="Hu S."/>
            <person name="Zeng C."/>
            <person name="Zhang J."/>
            <person name="Zhang Y."/>
            <person name="Li R."/>
            <person name="Xu Z."/>
            <person name="Li S."/>
            <person name="Li X."/>
            <person name="Zheng H."/>
            <person name="Cong L."/>
            <person name="Lin L."/>
            <person name="Yin J."/>
            <person name="Geng J."/>
            <person name="Li G."/>
            <person name="Shi J."/>
            <person name="Liu J."/>
            <person name="Lv H."/>
            <person name="Li J."/>
            <person name="Wang J."/>
            <person name="Deng Y."/>
            <person name="Ran L."/>
            <person name="Shi X."/>
            <person name="Wang X."/>
            <person name="Wu Q."/>
            <person name="Li C."/>
            <person name="Ren X."/>
            <person name="Wang J."/>
            <person name="Wang X."/>
            <person name="Li D."/>
            <person name="Liu D."/>
            <person name="Zhang X."/>
            <person name="Ji Z."/>
            <person name="Zhao W."/>
            <person name="Sun Y."/>
            <person name="Zhang Z."/>
            <person name="Bao J."/>
            <person name="Han Y."/>
            <person name="Dong L."/>
            <person name="Ji J."/>
            <person name="Chen P."/>
            <person name="Wu S."/>
            <person name="Liu J."/>
            <person name="Xiao Y."/>
            <person name="Bu D."/>
            <person name="Tan J."/>
            <person name="Yang L."/>
            <person name="Ye C."/>
            <person name="Zhang J."/>
            <person name="Xu J."/>
            <person name="Zhou Y."/>
            <person name="Yu Y."/>
            <person name="Zhang B."/>
            <person name="Zhuang S."/>
            <person name="Wei H."/>
            <person name="Liu B."/>
            <person name="Lei M."/>
            <person name="Yu H."/>
            <person name="Li Y."/>
            <person name="Xu H."/>
            <person name="Wei S."/>
            <person name="He X."/>
            <person name="Fang L."/>
            <person name="Zhang Z."/>
            <person name="Zhang Y."/>
            <person name="Huang X."/>
            <person name="Su Z."/>
            <person name="Tong W."/>
            <person name="Li J."/>
            <person name="Tong Z."/>
            <person name="Li S."/>
            <person name="Ye J."/>
            <person name="Wang L."/>
            <person name="Fang L."/>
            <person name="Lei T."/>
            <person name="Chen C.-S."/>
            <person name="Chen H.-C."/>
            <person name="Xu Z."/>
            <person name="Li H."/>
            <person name="Huang H."/>
            <person name="Zhang F."/>
            <person name="Xu H."/>
            <person name="Li N."/>
            <person name="Zhao C."/>
            <person name="Li S."/>
            <person name="Dong L."/>
            <person name="Huang Y."/>
            <person name="Li L."/>
            <person name="Xi Y."/>
            <person name="Qi Q."/>
            <person name="Li W."/>
            <person name="Zhang B."/>
            <person name="Hu W."/>
            <person name="Zhang Y."/>
            <person name="Tian X."/>
            <person name="Jiao Y."/>
            <person name="Liang X."/>
            <person name="Jin J."/>
            <person name="Gao L."/>
            <person name="Zheng W."/>
            <person name="Hao B."/>
            <person name="Liu S.-M."/>
            <person name="Wang W."/>
            <person name="Yuan L."/>
            <person name="Cao M."/>
            <person name="McDermott J."/>
            <person name="Samudrala R."/>
            <person name="Wang J."/>
            <person name="Wong G.K.-S."/>
            <person name="Yang H."/>
        </authorList>
    </citation>
    <scope>NUCLEOTIDE SEQUENCE [LARGE SCALE GENOMIC DNA]</scope>
    <source>
        <strain>cv. 93-11</strain>
    </source>
</reference>
<comment type="function">
    <text evidence="2">E3 ubiquitin-protein ligase involved in the regulation of grain size. May limit grain width and weight by restricting cell proliferation of the spikelet hull. Possesses E3 ubiquitin-protein ligase activity in vitro.</text>
</comment>
<comment type="catalytic activity">
    <reaction evidence="2">
        <text>S-ubiquitinyl-[E2 ubiquitin-conjugating enzyme]-L-cysteine + [acceptor protein]-L-lysine = [E2 ubiquitin-conjugating enzyme]-L-cysteine + N(6)-ubiquitinyl-[acceptor protein]-L-lysine.</text>
        <dbReference type="EC" id="2.3.2.27"/>
    </reaction>
</comment>
<comment type="pathway">
    <text evidence="4">Protein modification; protein ubiquitination.</text>
</comment>
<comment type="subcellular location">
    <subcellularLocation>
        <location evidence="2">Cytoplasm</location>
    </subcellularLocation>
</comment>
<comment type="tissue specificity">
    <text evidence="2">Expressed in roots, shoots, leaves, inflorescence meristems, stamens, pistils, spikelet hulls and endosperms 4 days after fertilization.</text>
</comment>
<comment type="miscellaneous">
    <text evidence="2">Plants silencing GW2 produce grains with increased width, resulting in enhanced grain weight, whereas overexpression of GW2 decreases grain size and weight. The naturally occurring WY3 allele of GW2, which encodes a truncated version of the protein with a 310-amino acid deletion, increases the number of cells of the spikelet hull, resulting in a wider spikelet hull, and subsequently accelerates the grain milk filling rate, resulting in increased grain width, weight and yield.</text>
</comment>
<comment type="sequence caution" evidence="4">
    <conflict type="erroneous gene model prediction">
        <sequence resource="EMBL-CDS" id="EEC72814"/>
    </conflict>
</comment>
<organism>
    <name type="scientific">Oryza sativa subsp. indica</name>
    <name type="common">Rice</name>
    <dbReference type="NCBI Taxonomy" id="39946"/>
    <lineage>
        <taxon>Eukaryota</taxon>
        <taxon>Viridiplantae</taxon>
        <taxon>Streptophyta</taxon>
        <taxon>Embryophyta</taxon>
        <taxon>Tracheophyta</taxon>
        <taxon>Spermatophyta</taxon>
        <taxon>Magnoliopsida</taxon>
        <taxon>Liliopsida</taxon>
        <taxon>Poales</taxon>
        <taxon>Poaceae</taxon>
        <taxon>BOP clade</taxon>
        <taxon>Oryzoideae</taxon>
        <taxon>Oryzeae</taxon>
        <taxon>Oryzinae</taxon>
        <taxon>Oryza</taxon>
        <taxon>Oryza sativa</taxon>
    </lineage>
</organism>
<gene>
    <name evidence="3" type="primary">GW2</name>
    <name evidence="5" type="ORF">OsI_06523</name>
</gene>
<dbReference type="EC" id="2.3.2.27" evidence="2"/>
<dbReference type="EMBL" id="EF447275">
    <property type="protein sequence ID" value="ABO31101.1"/>
    <property type="molecule type" value="mRNA"/>
</dbReference>
<dbReference type="EMBL" id="CM000127">
    <property type="protein sequence ID" value="EEC72814.1"/>
    <property type="status" value="ALT_SEQ"/>
    <property type="molecule type" value="Genomic_DNA"/>
</dbReference>
<dbReference type="STRING" id="39946.A4GWX9"/>
<dbReference type="HOGENOM" id="CLU_032010_0_0_1"/>
<dbReference type="UniPathway" id="UPA00143"/>
<dbReference type="Proteomes" id="UP000007015">
    <property type="component" value="Chromosome 2"/>
</dbReference>
<dbReference type="GO" id="GO:0005737">
    <property type="term" value="C:cytoplasm"/>
    <property type="evidence" value="ECO:0007669"/>
    <property type="project" value="UniProtKB-SubCell"/>
</dbReference>
<dbReference type="GO" id="GO:0061630">
    <property type="term" value="F:ubiquitin protein ligase activity"/>
    <property type="evidence" value="ECO:0000314"/>
    <property type="project" value="UniProtKB"/>
</dbReference>
<dbReference type="GO" id="GO:0008270">
    <property type="term" value="F:zinc ion binding"/>
    <property type="evidence" value="ECO:0007669"/>
    <property type="project" value="UniProtKB-KW"/>
</dbReference>
<dbReference type="GO" id="GO:0016567">
    <property type="term" value="P:protein ubiquitination"/>
    <property type="evidence" value="ECO:0000314"/>
    <property type="project" value="UniProtKB"/>
</dbReference>
<dbReference type="GO" id="GO:0080113">
    <property type="term" value="P:regulation of seed growth"/>
    <property type="evidence" value="ECO:0000315"/>
    <property type="project" value="UniProtKB"/>
</dbReference>
<dbReference type="InterPro" id="IPR039301">
    <property type="entry name" value="Sip5/DA2"/>
</dbReference>
<dbReference type="InterPro" id="IPR001841">
    <property type="entry name" value="Znf_RING"/>
</dbReference>
<dbReference type="PANTHER" id="PTHR31315">
    <property type="entry name" value="PROTEIN SIP5"/>
    <property type="match status" value="1"/>
</dbReference>
<dbReference type="PANTHER" id="PTHR31315:SF1">
    <property type="entry name" value="PROTEIN SIP5"/>
    <property type="match status" value="1"/>
</dbReference>
<dbReference type="SUPFAM" id="SSF57850">
    <property type="entry name" value="RING/U-box"/>
    <property type="match status" value="1"/>
</dbReference>
<dbReference type="PROSITE" id="PS50089">
    <property type="entry name" value="ZF_RING_2"/>
    <property type="match status" value="1"/>
</dbReference>
<protein>
    <recommendedName>
        <fullName evidence="4">E3 ubiquitin-protein ligase GW2</fullName>
        <ecNumber evidence="2">2.3.2.27</ecNumber>
    </recommendedName>
    <alternativeName>
        <fullName evidence="3">Protein GRAIN WIDTH AND WEIGHT 2</fullName>
    </alternativeName>
    <alternativeName>
        <fullName evidence="4">RING-type E3 ubiquitin transferase GW2</fullName>
    </alternativeName>
</protein>